<protein>
    <recommendedName>
        <fullName evidence="1">Threonine--tRNA ligase</fullName>
        <ecNumber evidence="1">6.1.1.3</ecNumber>
    </recommendedName>
    <alternativeName>
        <fullName evidence="1">Threonyl-tRNA synthetase</fullName>
        <shortName evidence="1">ThrRS</shortName>
    </alternativeName>
</protein>
<comment type="function">
    <text evidence="1">Catalyzes the attachment of threonine to tRNA(Thr) in a two-step reaction: L-threonine is first activated by ATP to form Thr-AMP and then transferred to the acceptor end of tRNA(Thr). Also edits incorrectly charged L-seryl-tRNA(Thr).</text>
</comment>
<comment type="catalytic activity">
    <reaction evidence="1">
        <text>tRNA(Thr) + L-threonine + ATP = L-threonyl-tRNA(Thr) + AMP + diphosphate + H(+)</text>
        <dbReference type="Rhea" id="RHEA:24624"/>
        <dbReference type="Rhea" id="RHEA-COMP:9670"/>
        <dbReference type="Rhea" id="RHEA-COMP:9704"/>
        <dbReference type="ChEBI" id="CHEBI:15378"/>
        <dbReference type="ChEBI" id="CHEBI:30616"/>
        <dbReference type="ChEBI" id="CHEBI:33019"/>
        <dbReference type="ChEBI" id="CHEBI:57926"/>
        <dbReference type="ChEBI" id="CHEBI:78442"/>
        <dbReference type="ChEBI" id="CHEBI:78534"/>
        <dbReference type="ChEBI" id="CHEBI:456215"/>
        <dbReference type="EC" id="6.1.1.3"/>
    </reaction>
</comment>
<comment type="cofactor">
    <cofactor evidence="1">
        <name>Zn(2+)</name>
        <dbReference type="ChEBI" id="CHEBI:29105"/>
    </cofactor>
    <text evidence="1">Binds 1 zinc ion per subunit.</text>
</comment>
<comment type="subunit">
    <text evidence="1">Homodimer.</text>
</comment>
<comment type="subcellular location">
    <subcellularLocation>
        <location evidence="1">Cytoplasm</location>
    </subcellularLocation>
</comment>
<comment type="domain">
    <text evidence="1">The N-terminal domain is an archaea-specific tRNA-editing domain that hydrolyzes incorrectly charged L-seryl-tRNA(Thr). Catalysis of tRNA editing is performed by the charged tRNA itself.</text>
</comment>
<comment type="similarity">
    <text evidence="1">Belongs to the class-II aminoacyl-tRNA synthetase family.</text>
</comment>
<dbReference type="EC" id="6.1.1.3" evidence="1"/>
<dbReference type="EMBL" id="BX950229">
    <property type="protein sequence ID" value="CAF29970.1"/>
    <property type="molecule type" value="Genomic_DNA"/>
</dbReference>
<dbReference type="RefSeq" id="WP_011170358.1">
    <property type="nucleotide sequence ID" value="NC_005791.1"/>
</dbReference>
<dbReference type="SMR" id="Q6M057"/>
<dbReference type="STRING" id="267377.MMP0414"/>
<dbReference type="EnsemblBacteria" id="CAF29970">
    <property type="protein sequence ID" value="CAF29970"/>
    <property type="gene ID" value="MMP0414"/>
</dbReference>
<dbReference type="GeneID" id="2762044"/>
<dbReference type="KEGG" id="mmp:MMP0414"/>
<dbReference type="PATRIC" id="fig|267377.15.peg.418"/>
<dbReference type="eggNOG" id="arCOG00401">
    <property type="taxonomic scope" value="Archaea"/>
</dbReference>
<dbReference type="HOGENOM" id="CLU_029833_0_0_2"/>
<dbReference type="OrthoDB" id="372136at2157"/>
<dbReference type="Proteomes" id="UP000000590">
    <property type="component" value="Chromosome"/>
</dbReference>
<dbReference type="GO" id="GO:0005737">
    <property type="term" value="C:cytoplasm"/>
    <property type="evidence" value="ECO:0007669"/>
    <property type="project" value="UniProtKB-SubCell"/>
</dbReference>
<dbReference type="GO" id="GO:0005524">
    <property type="term" value="F:ATP binding"/>
    <property type="evidence" value="ECO:0007669"/>
    <property type="project" value="UniProtKB-UniRule"/>
</dbReference>
<dbReference type="GO" id="GO:0004829">
    <property type="term" value="F:threonine-tRNA ligase activity"/>
    <property type="evidence" value="ECO:0007669"/>
    <property type="project" value="UniProtKB-UniRule"/>
</dbReference>
<dbReference type="GO" id="GO:0000049">
    <property type="term" value="F:tRNA binding"/>
    <property type="evidence" value="ECO:0007669"/>
    <property type="project" value="UniProtKB-KW"/>
</dbReference>
<dbReference type="GO" id="GO:0008270">
    <property type="term" value="F:zinc ion binding"/>
    <property type="evidence" value="ECO:0007669"/>
    <property type="project" value="InterPro"/>
</dbReference>
<dbReference type="GO" id="GO:0006435">
    <property type="term" value="P:threonyl-tRNA aminoacylation"/>
    <property type="evidence" value="ECO:0007669"/>
    <property type="project" value="UniProtKB-UniRule"/>
</dbReference>
<dbReference type="CDD" id="cd00860">
    <property type="entry name" value="ThrRS_anticodon"/>
    <property type="match status" value="1"/>
</dbReference>
<dbReference type="FunFam" id="3.40.50.800:FF:000001">
    <property type="entry name" value="Threonine--tRNA ligase"/>
    <property type="match status" value="1"/>
</dbReference>
<dbReference type="FunFam" id="3.50.80.10:FF:000004">
    <property type="entry name" value="Threonine--tRNA ligase"/>
    <property type="match status" value="1"/>
</dbReference>
<dbReference type="Gene3D" id="3.40.50.800">
    <property type="entry name" value="Anticodon-binding domain"/>
    <property type="match status" value="1"/>
</dbReference>
<dbReference type="Gene3D" id="3.30.930.10">
    <property type="entry name" value="Bira Bifunctional Protein, Domain 2"/>
    <property type="match status" value="1"/>
</dbReference>
<dbReference type="Gene3D" id="3.50.80.10">
    <property type="entry name" value="D-tyrosyl-tRNA(Tyr) deacylase"/>
    <property type="match status" value="1"/>
</dbReference>
<dbReference type="HAMAP" id="MF_00184">
    <property type="entry name" value="Thr_tRNA_synth"/>
    <property type="match status" value="1"/>
</dbReference>
<dbReference type="InterPro" id="IPR002314">
    <property type="entry name" value="aa-tRNA-synt_IIb"/>
</dbReference>
<dbReference type="InterPro" id="IPR006195">
    <property type="entry name" value="aa-tRNA-synth_II"/>
</dbReference>
<dbReference type="InterPro" id="IPR045864">
    <property type="entry name" value="aa-tRNA-synth_II/BPL/LPL"/>
</dbReference>
<dbReference type="InterPro" id="IPR004154">
    <property type="entry name" value="Anticodon-bd"/>
</dbReference>
<dbReference type="InterPro" id="IPR036621">
    <property type="entry name" value="Anticodon-bd_dom_sf"/>
</dbReference>
<dbReference type="InterPro" id="IPR023509">
    <property type="entry name" value="DTD-like_sf"/>
</dbReference>
<dbReference type="InterPro" id="IPR002320">
    <property type="entry name" value="Thr-tRNA-ligase_IIa"/>
</dbReference>
<dbReference type="InterPro" id="IPR015011">
    <property type="entry name" value="Threonyl-tRNA_syn_edit_dom_arc"/>
</dbReference>
<dbReference type="InterPro" id="IPR047246">
    <property type="entry name" value="ThrRS_anticodon"/>
</dbReference>
<dbReference type="NCBIfam" id="NF003068">
    <property type="entry name" value="PRK03991.1"/>
    <property type="match status" value="1"/>
</dbReference>
<dbReference type="NCBIfam" id="TIGR00418">
    <property type="entry name" value="thrS"/>
    <property type="match status" value="1"/>
</dbReference>
<dbReference type="PANTHER" id="PTHR11451:SF44">
    <property type="entry name" value="THREONINE--TRNA LIGASE, CHLOROPLASTIC_MITOCHONDRIAL 2"/>
    <property type="match status" value="1"/>
</dbReference>
<dbReference type="PANTHER" id="PTHR11451">
    <property type="entry name" value="THREONINE-TRNA LIGASE"/>
    <property type="match status" value="1"/>
</dbReference>
<dbReference type="Pfam" id="PF03129">
    <property type="entry name" value="HGTP_anticodon"/>
    <property type="match status" value="1"/>
</dbReference>
<dbReference type="Pfam" id="PF00587">
    <property type="entry name" value="tRNA-synt_2b"/>
    <property type="match status" value="1"/>
</dbReference>
<dbReference type="Pfam" id="PF08915">
    <property type="entry name" value="tRNA-Thr_ED"/>
    <property type="match status" value="1"/>
</dbReference>
<dbReference type="PRINTS" id="PR01047">
    <property type="entry name" value="TRNASYNTHTHR"/>
</dbReference>
<dbReference type="SUPFAM" id="SSF52954">
    <property type="entry name" value="Class II aaRS ABD-related"/>
    <property type="match status" value="1"/>
</dbReference>
<dbReference type="SUPFAM" id="SSF55681">
    <property type="entry name" value="Class II aaRS and biotin synthetases"/>
    <property type="match status" value="1"/>
</dbReference>
<dbReference type="PROSITE" id="PS50862">
    <property type="entry name" value="AA_TRNA_LIGASE_II"/>
    <property type="match status" value="1"/>
</dbReference>
<reference key="1">
    <citation type="journal article" date="2004" name="J. Bacteriol.">
        <title>Complete genome sequence of the genetically tractable hydrogenotrophic methanogen Methanococcus maripaludis.</title>
        <authorList>
            <person name="Hendrickson E.L."/>
            <person name="Kaul R."/>
            <person name="Zhou Y."/>
            <person name="Bovee D."/>
            <person name="Chapman P."/>
            <person name="Chung J."/>
            <person name="Conway de Macario E."/>
            <person name="Dodsworth J.A."/>
            <person name="Gillett W."/>
            <person name="Graham D.E."/>
            <person name="Hackett M."/>
            <person name="Haydock A.K."/>
            <person name="Kang A."/>
            <person name="Land M.L."/>
            <person name="Levy R."/>
            <person name="Lie T.J."/>
            <person name="Major T.A."/>
            <person name="Moore B.C."/>
            <person name="Porat I."/>
            <person name="Palmeiri A."/>
            <person name="Rouse G."/>
            <person name="Saenphimmachak C."/>
            <person name="Soell D."/>
            <person name="Van Dien S."/>
            <person name="Wang T."/>
            <person name="Whitman W.B."/>
            <person name="Xia Q."/>
            <person name="Zhang Y."/>
            <person name="Larimer F.W."/>
            <person name="Olson M.V."/>
            <person name="Leigh J.A."/>
        </authorList>
    </citation>
    <scope>NUCLEOTIDE SEQUENCE [LARGE SCALE GENOMIC DNA]</scope>
    <source>
        <strain>DSM 14266 / JCM 13030 / NBRC 101832 / S2 / LL</strain>
    </source>
</reference>
<sequence length="622" mass="71469">MKTLLIHSDYLEFEAKEKTKVAEKTDVLNGKMDECLTVFIAVEKDDESDPNAVVKNAVEEIIKTADNLKVKNVVVYPYAHLSSDLGSPATAKEILAEIESELSNNYEVLRAPFGWYKSFKISCKGHPLSELSRKITTDRKEEVKKEKVVSKFYIIDGESQNLTEVNDEIIAKMEDKRLLALLKHELEIKEEATERGEPPHVKYIKEKEICDYEPSSDAGHFRWYPKGKLIRDLLSDYVYNLVVERGGMPVETPVMYDLQNNAIREHADKFGERQYRFTQGGKDLMLRFAACFGQFMMKKDMYLLPKHLPLRLYELSTYSFRYEQRGELVGLKRLRAFTMPDMHTVCMDMKQAMEAFEDQLWMGLKTGDDFKTPYAIIFRFTQDFFDENKEWFFAMAKEYKQKYGKDAILEILSGRKHYWVGKVDMAVVDSFGRPIENPTVQIDVESAERFGIVVHDGDKKVHPIILHCSPTGSVERVLCGLLENAYLNTLENKPPALPTWLTPIQARVIPVGDKHEEYALEVVNKLRSSGIRADFDDREESMGKKIRNAGTDWVNYVVVIGDSEMESGKLTVTVREESELKKPKKESLSVEELIEKISSETIGAPKRPLPLPMKCSMQPIFR</sequence>
<keyword id="KW-0030">Aminoacyl-tRNA synthetase</keyword>
<keyword id="KW-0067">ATP-binding</keyword>
<keyword id="KW-0963">Cytoplasm</keyword>
<keyword id="KW-0436">Ligase</keyword>
<keyword id="KW-0479">Metal-binding</keyword>
<keyword id="KW-0547">Nucleotide-binding</keyword>
<keyword id="KW-0648">Protein biosynthesis</keyword>
<keyword id="KW-1185">Reference proteome</keyword>
<keyword id="KW-0694">RNA-binding</keyword>
<keyword id="KW-0820">tRNA-binding</keyword>
<keyword id="KW-0862">Zinc</keyword>
<organism>
    <name type="scientific">Methanococcus maripaludis (strain DSM 14266 / JCM 13030 / NBRC 101832 / S2 / LL)</name>
    <dbReference type="NCBI Taxonomy" id="267377"/>
    <lineage>
        <taxon>Archaea</taxon>
        <taxon>Methanobacteriati</taxon>
        <taxon>Methanobacteriota</taxon>
        <taxon>Methanomada group</taxon>
        <taxon>Methanococci</taxon>
        <taxon>Methanococcales</taxon>
        <taxon>Methanococcaceae</taxon>
        <taxon>Methanococcus</taxon>
    </lineage>
</organism>
<evidence type="ECO:0000255" key="1">
    <source>
        <dbReference type="HAMAP-Rule" id="MF_00184"/>
    </source>
</evidence>
<feature type="chain" id="PRO_0000101104" description="Threonine--tRNA ligase">
    <location>
        <begin position="1"/>
        <end position="622"/>
    </location>
</feature>
<feature type="region of interest" description="Editing domain" evidence="1">
    <location>
        <begin position="1"/>
        <end position="136"/>
    </location>
</feature>
<feature type="region of interest" description="Catalytic" evidence="1">
    <location>
        <begin position="199"/>
        <end position="498"/>
    </location>
</feature>
<feature type="binding site" evidence="1">
    <location>
        <position position="291"/>
    </location>
    <ligand>
        <name>Zn(2+)</name>
        <dbReference type="ChEBI" id="CHEBI:29105"/>
    </ligand>
</feature>
<feature type="binding site" evidence="1">
    <location>
        <position position="343"/>
    </location>
    <ligand>
        <name>Zn(2+)</name>
        <dbReference type="ChEBI" id="CHEBI:29105"/>
    </ligand>
</feature>
<feature type="binding site" evidence="1">
    <location>
        <position position="467"/>
    </location>
    <ligand>
        <name>Zn(2+)</name>
        <dbReference type="ChEBI" id="CHEBI:29105"/>
    </ligand>
</feature>
<accession>Q6M057</accession>
<gene>
    <name evidence="1" type="primary">thrS</name>
    <name type="ordered locus">MMP0414</name>
</gene>
<proteinExistence type="inferred from homology"/>
<name>SYT_METMP</name>